<evidence type="ECO:0000255" key="1">
    <source>
        <dbReference type="HAMAP-Rule" id="MF_00598"/>
    </source>
</evidence>
<name>SMG_HALHL</name>
<protein>
    <recommendedName>
        <fullName evidence="1">Protein Smg homolog</fullName>
    </recommendedName>
</protein>
<keyword id="KW-1185">Reference proteome</keyword>
<comment type="similarity">
    <text evidence="1">Belongs to the Smg family.</text>
</comment>
<sequence length="156" mass="18066">MKQNVFEVLMYLFENYLYNDEEPGDRDSLESELHEAGFSAMEIRKAFEWLDALADSRVLPAAPSGKSSIRLFGEPELARLDTETRGFILYLEQVGILTAESRELVLDRILALDDHEVDLDTVKWVILMVLFNRPGEEEAYNWMENLMFDVPTHLVH</sequence>
<organism>
    <name type="scientific">Halorhodospira halophila (strain DSM 244 / SL1)</name>
    <name type="common">Ectothiorhodospira halophila (strain DSM 244 / SL1)</name>
    <dbReference type="NCBI Taxonomy" id="349124"/>
    <lineage>
        <taxon>Bacteria</taxon>
        <taxon>Pseudomonadati</taxon>
        <taxon>Pseudomonadota</taxon>
        <taxon>Gammaproteobacteria</taxon>
        <taxon>Chromatiales</taxon>
        <taxon>Ectothiorhodospiraceae</taxon>
        <taxon>Halorhodospira</taxon>
    </lineage>
</organism>
<dbReference type="EMBL" id="CP000544">
    <property type="protein sequence ID" value="ABM63088.1"/>
    <property type="molecule type" value="Genomic_DNA"/>
</dbReference>
<dbReference type="RefSeq" id="WP_011815110.1">
    <property type="nucleotide sequence ID" value="NC_008789.1"/>
</dbReference>
<dbReference type="SMR" id="A1WZH6"/>
<dbReference type="STRING" id="349124.Hhal_2325"/>
<dbReference type="KEGG" id="hha:Hhal_2325"/>
<dbReference type="eggNOG" id="COG2922">
    <property type="taxonomic scope" value="Bacteria"/>
</dbReference>
<dbReference type="HOGENOM" id="CLU_133242_0_0_6"/>
<dbReference type="OrthoDB" id="9788984at2"/>
<dbReference type="Proteomes" id="UP000000647">
    <property type="component" value="Chromosome"/>
</dbReference>
<dbReference type="HAMAP" id="MF_00598">
    <property type="entry name" value="Smg"/>
    <property type="match status" value="1"/>
</dbReference>
<dbReference type="InterPro" id="IPR007456">
    <property type="entry name" value="Smg"/>
</dbReference>
<dbReference type="PANTHER" id="PTHR38692">
    <property type="entry name" value="PROTEIN SMG"/>
    <property type="match status" value="1"/>
</dbReference>
<dbReference type="PANTHER" id="PTHR38692:SF1">
    <property type="entry name" value="PROTEIN SMG"/>
    <property type="match status" value="1"/>
</dbReference>
<dbReference type="Pfam" id="PF04361">
    <property type="entry name" value="DUF494"/>
    <property type="match status" value="1"/>
</dbReference>
<reference key="1">
    <citation type="submission" date="2006-12" db="EMBL/GenBank/DDBJ databases">
        <title>Complete sequence of Halorhodospira halophila SL1.</title>
        <authorList>
            <consortium name="US DOE Joint Genome Institute"/>
            <person name="Copeland A."/>
            <person name="Lucas S."/>
            <person name="Lapidus A."/>
            <person name="Barry K."/>
            <person name="Detter J.C."/>
            <person name="Glavina del Rio T."/>
            <person name="Hammon N."/>
            <person name="Israni S."/>
            <person name="Dalin E."/>
            <person name="Tice H."/>
            <person name="Pitluck S."/>
            <person name="Saunders E."/>
            <person name="Brettin T."/>
            <person name="Bruce D."/>
            <person name="Han C."/>
            <person name="Tapia R."/>
            <person name="Schmutz J."/>
            <person name="Larimer F."/>
            <person name="Land M."/>
            <person name="Hauser L."/>
            <person name="Kyrpides N."/>
            <person name="Mikhailova N."/>
            <person name="Hoff W."/>
            <person name="Richardson P."/>
        </authorList>
    </citation>
    <scope>NUCLEOTIDE SEQUENCE [LARGE SCALE GENOMIC DNA]</scope>
    <source>
        <strain>DSM 244 / SL1</strain>
    </source>
</reference>
<feature type="chain" id="PRO_1000025651" description="Protein Smg homolog">
    <location>
        <begin position="1"/>
        <end position="156"/>
    </location>
</feature>
<proteinExistence type="inferred from homology"/>
<accession>A1WZH6</accession>
<gene>
    <name evidence="1" type="primary">smg</name>
    <name type="ordered locus">Hhal_2325</name>
</gene>